<evidence type="ECO:0000250" key="1"/>
<evidence type="ECO:0000305" key="2"/>
<keyword id="KW-0479">Metal-binding</keyword>
<keyword id="KW-0520">NAD</keyword>
<keyword id="KW-0560">Oxidoreductase</keyword>
<keyword id="KW-0862">Zinc</keyword>
<accession>Q2FJ31</accession>
<proteinExistence type="inferred from homology"/>
<sequence>MRAAVVTKDHKVSIEDKKLRALKPGEALVQTEYCGVCHTDLHVKNADFGDVTGVTLGHEGIGKVIEVAEDVESLKIGDRVSIAWMFESCGRCEYCTTGRETLCRSVKNAGYTVDGAMAEQVIVTADYAVKVPEKLDPAAASSITCAGVTTYKAVKVSNVKPGQWLGVFGIGGLGNLALQYAKNVMGAKIVAFDINDDKLAFAKELGADAIINSKDVDPVAEVMKLTDNKGLDATVVTSVAKTPFNQAVDVVKAGARVVAVGLPVDKMNLDIPRLVLDGIEVVGSLVGTRQDLREAFEFAAENKVTPKVQLRKLEEINDIFEEMENGTITGRMVIKF</sequence>
<protein>
    <recommendedName>
        <fullName>Alcohol dehydrogenase</fullName>
        <shortName>ADH</shortName>
        <ecNumber>1.1.1.1</ecNumber>
    </recommendedName>
</protein>
<gene>
    <name type="primary">adh</name>
    <name type="ordered locus">SAUSA300_0594</name>
</gene>
<dbReference type="EC" id="1.1.1.1"/>
<dbReference type="EMBL" id="CP000255">
    <property type="protein sequence ID" value="ABD21978.1"/>
    <property type="molecule type" value="Genomic_DNA"/>
</dbReference>
<dbReference type="SMR" id="Q2FJ31"/>
<dbReference type="KEGG" id="saa:SAUSA300_0594"/>
<dbReference type="HOGENOM" id="CLU_026673_20_1_9"/>
<dbReference type="OMA" id="YKGLKMT"/>
<dbReference type="Proteomes" id="UP000001939">
    <property type="component" value="Chromosome"/>
</dbReference>
<dbReference type="GO" id="GO:0004022">
    <property type="term" value="F:alcohol dehydrogenase (NAD+) activity"/>
    <property type="evidence" value="ECO:0007669"/>
    <property type="project" value="UniProtKB-EC"/>
</dbReference>
<dbReference type="GO" id="GO:0008270">
    <property type="term" value="F:zinc ion binding"/>
    <property type="evidence" value="ECO:0007669"/>
    <property type="project" value="InterPro"/>
</dbReference>
<dbReference type="CDD" id="cd08297">
    <property type="entry name" value="CAD3"/>
    <property type="match status" value="1"/>
</dbReference>
<dbReference type="FunFam" id="3.40.50.720:FF:000039">
    <property type="entry name" value="Alcohol dehydrogenase AdhP"/>
    <property type="match status" value="1"/>
</dbReference>
<dbReference type="Gene3D" id="3.90.180.10">
    <property type="entry name" value="Medium-chain alcohol dehydrogenases, catalytic domain"/>
    <property type="match status" value="1"/>
</dbReference>
<dbReference type="Gene3D" id="3.40.50.720">
    <property type="entry name" value="NAD(P)-binding Rossmann-like Domain"/>
    <property type="match status" value="1"/>
</dbReference>
<dbReference type="InterPro" id="IPR013149">
    <property type="entry name" value="ADH-like_C"/>
</dbReference>
<dbReference type="InterPro" id="IPR013154">
    <property type="entry name" value="ADH-like_N"/>
</dbReference>
<dbReference type="InterPro" id="IPR002328">
    <property type="entry name" value="ADH_Zn_CS"/>
</dbReference>
<dbReference type="InterPro" id="IPR029752">
    <property type="entry name" value="D-isomer_DH_CS1"/>
</dbReference>
<dbReference type="InterPro" id="IPR011032">
    <property type="entry name" value="GroES-like_sf"/>
</dbReference>
<dbReference type="InterPro" id="IPR036291">
    <property type="entry name" value="NAD(P)-bd_dom_sf"/>
</dbReference>
<dbReference type="InterPro" id="IPR020843">
    <property type="entry name" value="PKS_ER"/>
</dbReference>
<dbReference type="NCBIfam" id="NF006940">
    <property type="entry name" value="PRK09422.1"/>
    <property type="match status" value="1"/>
</dbReference>
<dbReference type="PANTHER" id="PTHR42940">
    <property type="entry name" value="ALCOHOL DEHYDROGENASE 1-RELATED"/>
    <property type="match status" value="1"/>
</dbReference>
<dbReference type="PANTHER" id="PTHR42940:SF8">
    <property type="entry name" value="VACUOLAR PROTEIN SORTING-ASSOCIATED PROTEIN 11"/>
    <property type="match status" value="1"/>
</dbReference>
<dbReference type="Pfam" id="PF08240">
    <property type="entry name" value="ADH_N"/>
    <property type="match status" value="1"/>
</dbReference>
<dbReference type="Pfam" id="PF00107">
    <property type="entry name" value="ADH_zinc_N"/>
    <property type="match status" value="1"/>
</dbReference>
<dbReference type="SMART" id="SM00829">
    <property type="entry name" value="PKS_ER"/>
    <property type="match status" value="1"/>
</dbReference>
<dbReference type="SUPFAM" id="SSF50129">
    <property type="entry name" value="GroES-like"/>
    <property type="match status" value="1"/>
</dbReference>
<dbReference type="SUPFAM" id="SSF51735">
    <property type="entry name" value="NAD(P)-binding Rossmann-fold domains"/>
    <property type="match status" value="1"/>
</dbReference>
<dbReference type="PROSITE" id="PS00059">
    <property type="entry name" value="ADH_ZINC"/>
    <property type="match status" value="1"/>
</dbReference>
<feature type="chain" id="PRO_0000273032" description="Alcohol dehydrogenase">
    <location>
        <begin position="1"/>
        <end position="336"/>
    </location>
</feature>
<feature type="binding site" evidence="1">
    <location>
        <position position="37"/>
    </location>
    <ligand>
        <name>Zn(2+)</name>
        <dbReference type="ChEBI" id="CHEBI:29105"/>
        <label>1</label>
        <note>catalytic</note>
    </ligand>
</feature>
<feature type="binding site" evidence="1">
    <location>
        <position position="58"/>
    </location>
    <ligand>
        <name>Zn(2+)</name>
        <dbReference type="ChEBI" id="CHEBI:29105"/>
        <label>1</label>
        <note>catalytic</note>
    </ligand>
</feature>
<feature type="binding site" evidence="1">
    <location>
        <position position="89"/>
    </location>
    <ligand>
        <name>Zn(2+)</name>
        <dbReference type="ChEBI" id="CHEBI:29105"/>
        <label>2</label>
    </ligand>
</feature>
<feature type="binding site" evidence="1">
    <location>
        <position position="92"/>
    </location>
    <ligand>
        <name>Zn(2+)</name>
        <dbReference type="ChEBI" id="CHEBI:29105"/>
        <label>2</label>
    </ligand>
</feature>
<feature type="binding site" evidence="1">
    <location>
        <position position="95"/>
    </location>
    <ligand>
        <name>Zn(2+)</name>
        <dbReference type="ChEBI" id="CHEBI:29105"/>
        <label>2</label>
    </ligand>
</feature>
<feature type="binding site" evidence="1">
    <location>
        <position position="103"/>
    </location>
    <ligand>
        <name>Zn(2+)</name>
        <dbReference type="ChEBI" id="CHEBI:29105"/>
        <label>2</label>
    </ligand>
</feature>
<feature type="binding site" evidence="1">
    <location>
        <position position="145"/>
    </location>
    <ligand>
        <name>Zn(2+)</name>
        <dbReference type="ChEBI" id="CHEBI:29105"/>
        <label>1</label>
        <note>catalytic</note>
    </ligand>
</feature>
<comment type="catalytic activity">
    <reaction>
        <text>a primary alcohol + NAD(+) = an aldehyde + NADH + H(+)</text>
        <dbReference type="Rhea" id="RHEA:10736"/>
        <dbReference type="ChEBI" id="CHEBI:15378"/>
        <dbReference type="ChEBI" id="CHEBI:15734"/>
        <dbReference type="ChEBI" id="CHEBI:17478"/>
        <dbReference type="ChEBI" id="CHEBI:57540"/>
        <dbReference type="ChEBI" id="CHEBI:57945"/>
        <dbReference type="EC" id="1.1.1.1"/>
    </reaction>
</comment>
<comment type="catalytic activity">
    <reaction>
        <text>a secondary alcohol + NAD(+) = a ketone + NADH + H(+)</text>
        <dbReference type="Rhea" id="RHEA:10740"/>
        <dbReference type="ChEBI" id="CHEBI:15378"/>
        <dbReference type="ChEBI" id="CHEBI:17087"/>
        <dbReference type="ChEBI" id="CHEBI:35681"/>
        <dbReference type="ChEBI" id="CHEBI:57540"/>
        <dbReference type="ChEBI" id="CHEBI:57945"/>
        <dbReference type="EC" id="1.1.1.1"/>
    </reaction>
</comment>
<comment type="cofactor">
    <cofactor evidence="1">
        <name>Zn(2+)</name>
        <dbReference type="ChEBI" id="CHEBI:29105"/>
    </cofactor>
    <text evidence="1">Binds 2 Zn(2+) ions per subunit.</text>
</comment>
<comment type="similarity">
    <text evidence="2">Belongs to the zinc-containing alcohol dehydrogenase family.</text>
</comment>
<reference key="1">
    <citation type="journal article" date="2006" name="Lancet">
        <title>Complete genome sequence of USA300, an epidemic clone of community-acquired meticillin-resistant Staphylococcus aureus.</title>
        <authorList>
            <person name="Diep B.A."/>
            <person name="Gill S.R."/>
            <person name="Chang R.F."/>
            <person name="Phan T.H."/>
            <person name="Chen J.H."/>
            <person name="Davidson M.G."/>
            <person name="Lin F."/>
            <person name="Lin J."/>
            <person name="Carleton H.A."/>
            <person name="Mongodin E.F."/>
            <person name="Sensabaugh G.F."/>
            <person name="Perdreau-Remington F."/>
        </authorList>
    </citation>
    <scope>NUCLEOTIDE SEQUENCE [LARGE SCALE GENOMIC DNA]</scope>
    <source>
        <strain>USA300</strain>
    </source>
</reference>
<name>ADH_STAA3</name>
<organism>
    <name type="scientific">Staphylococcus aureus (strain USA300)</name>
    <dbReference type="NCBI Taxonomy" id="367830"/>
    <lineage>
        <taxon>Bacteria</taxon>
        <taxon>Bacillati</taxon>
        <taxon>Bacillota</taxon>
        <taxon>Bacilli</taxon>
        <taxon>Bacillales</taxon>
        <taxon>Staphylococcaceae</taxon>
        <taxon>Staphylococcus</taxon>
    </lineage>
</organism>